<protein>
    <recommendedName>
        <fullName evidence="1">1-deoxy-D-xylulose-5-phosphate synthase 1</fullName>
        <ecNumber evidence="1">2.2.1.7</ecNumber>
    </recommendedName>
    <alternativeName>
        <fullName evidence="1">1-deoxyxylulose-5-phosphate synthase 1</fullName>
        <shortName evidence="1">DXP synthase 1</shortName>
        <shortName evidence="1">DXPS 1</shortName>
    </alternativeName>
</protein>
<gene>
    <name evidence="1" type="primary">dxs1</name>
</gene>
<organism>
    <name type="scientific">Kitasatospora griseola</name>
    <name type="common">Streptomyces griseolosporeus</name>
    <dbReference type="NCBI Taxonomy" id="2064"/>
    <lineage>
        <taxon>Bacteria</taxon>
        <taxon>Bacillati</taxon>
        <taxon>Actinomycetota</taxon>
        <taxon>Actinomycetes</taxon>
        <taxon>Kitasatosporales</taxon>
        <taxon>Streptomycetaceae</taxon>
        <taxon>Kitasatospora</taxon>
    </lineage>
</organism>
<comment type="function">
    <text evidence="1">Catalyzes the acyloin condensation reaction between C atoms 2 and 3 of pyruvate and glyceraldehyde 3-phosphate to yield 1-deoxy-D-xylulose-5-phosphate (DXP).</text>
</comment>
<comment type="catalytic activity">
    <reaction evidence="1">
        <text>D-glyceraldehyde 3-phosphate + pyruvate + H(+) = 1-deoxy-D-xylulose 5-phosphate + CO2</text>
        <dbReference type="Rhea" id="RHEA:12605"/>
        <dbReference type="ChEBI" id="CHEBI:15361"/>
        <dbReference type="ChEBI" id="CHEBI:15378"/>
        <dbReference type="ChEBI" id="CHEBI:16526"/>
        <dbReference type="ChEBI" id="CHEBI:57792"/>
        <dbReference type="ChEBI" id="CHEBI:59776"/>
        <dbReference type="EC" id="2.2.1.7"/>
    </reaction>
</comment>
<comment type="cofactor">
    <cofactor evidence="1">
        <name>Mg(2+)</name>
        <dbReference type="ChEBI" id="CHEBI:18420"/>
    </cofactor>
    <text evidence="1">Binds 1 Mg(2+) ion per subunit.</text>
</comment>
<comment type="cofactor">
    <cofactor evidence="1">
        <name>thiamine diphosphate</name>
        <dbReference type="ChEBI" id="CHEBI:58937"/>
    </cofactor>
    <text evidence="1">Binds 1 thiamine pyrophosphate per subunit.</text>
</comment>
<comment type="pathway">
    <text evidence="1">Metabolic intermediate biosynthesis; 1-deoxy-D-xylulose 5-phosphate biosynthesis; 1-deoxy-D-xylulose 5-phosphate from D-glyceraldehyde 3-phosphate and pyruvate: step 1/1.</text>
</comment>
<comment type="subunit">
    <text evidence="1">Homodimer.</text>
</comment>
<comment type="similarity">
    <text evidence="1">Belongs to the transketolase family. DXPS subfamily.</text>
</comment>
<keyword id="KW-0414">Isoprene biosynthesis</keyword>
<keyword id="KW-0460">Magnesium</keyword>
<keyword id="KW-0479">Metal-binding</keyword>
<keyword id="KW-0784">Thiamine biosynthesis</keyword>
<keyword id="KW-0786">Thiamine pyrophosphate</keyword>
<keyword id="KW-0808">Transferase</keyword>
<dbReference type="EC" id="2.2.1.7" evidence="1"/>
<dbReference type="EMBL" id="AB042821">
    <property type="protein sequence ID" value="BAB20589.1"/>
    <property type="molecule type" value="Genomic_DNA"/>
</dbReference>
<dbReference type="SMR" id="Q9F1V2"/>
<dbReference type="STRING" id="2064.TR51_19475"/>
<dbReference type="UniPathway" id="UPA00064">
    <property type="reaction ID" value="UER00091"/>
</dbReference>
<dbReference type="GO" id="GO:0005829">
    <property type="term" value="C:cytosol"/>
    <property type="evidence" value="ECO:0007669"/>
    <property type="project" value="TreeGrafter"/>
</dbReference>
<dbReference type="GO" id="GO:0008661">
    <property type="term" value="F:1-deoxy-D-xylulose-5-phosphate synthase activity"/>
    <property type="evidence" value="ECO:0007669"/>
    <property type="project" value="UniProtKB-UniRule"/>
</dbReference>
<dbReference type="GO" id="GO:0000287">
    <property type="term" value="F:magnesium ion binding"/>
    <property type="evidence" value="ECO:0007669"/>
    <property type="project" value="UniProtKB-UniRule"/>
</dbReference>
<dbReference type="GO" id="GO:0030976">
    <property type="term" value="F:thiamine pyrophosphate binding"/>
    <property type="evidence" value="ECO:0007669"/>
    <property type="project" value="UniProtKB-UniRule"/>
</dbReference>
<dbReference type="GO" id="GO:0052865">
    <property type="term" value="P:1-deoxy-D-xylulose 5-phosphate biosynthetic process"/>
    <property type="evidence" value="ECO:0007669"/>
    <property type="project" value="UniProtKB-UniPathway"/>
</dbReference>
<dbReference type="GO" id="GO:0019288">
    <property type="term" value="P:isopentenyl diphosphate biosynthetic process, methylerythritol 4-phosphate pathway"/>
    <property type="evidence" value="ECO:0007669"/>
    <property type="project" value="TreeGrafter"/>
</dbReference>
<dbReference type="GO" id="GO:0016114">
    <property type="term" value="P:terpenoid biosynthetic process"/>
    <property type="evidence" value="ECO:0007669"/>
    <property type="project" value="UniProtKB-UniRule"/>
</dbReference>
<dbReference type="GO" id="GO:0009228">
    <property type="term" value="P:thiamine biosynthetic process"/>
    <property type="evidence" value="ECO:0007669"/>
    <property type="project" value="UniProtKB-UniRule"/>
</dbReference>
<dbReference type="CDD" id="cd02007">
    <property type="entry name" value="TPP_DXS"/>
    <property type="match status" value="1"/>
</dbReference>
<dbReference type="CDD" id="cd07033">
    <property type="entry name" value="TPP_PYR_DXS_TK_like"/>
    <property type="match status" value="1"/>
</dbReference>
<dbReference type="FunFam" id="3.40.50.920:FF:000002">
    <property type="entry name" value="1-deoxy-D-xylulose-5-phosphate synthase"/>
    <property type="match status" value="1"/>
</dbReference>
<dbReference type="FunFam" id="3.40.50.970:FF:000005">
    <property type="entry name" value="1-deoxy-D-xylulose-5-phosphate synthase"/>
    <property type="match status" value="1"/>
</dbReference>
<dbReference type="Gene3D" id="3.40.50.920">
    <property type="match status" value="1"/>
</dbReference>
<dbReference type="Gene3D" id="3.40.50.970">
    <property type="match status" value="2"/>
</dbReference>
<dbReference type="HAMAP" id="MF_00315">
    <property type="entry name" value="DXP_synth"/>
    <property type="match status" value="1"/>
</dbReference>
<dbReference type="InterPro" id="IPR005477">
    <property type="entry name" value="Dxylulose-5-P_synthase"/>
</dbReference>
<dbReference type="InterPro" id="IPR029061">
    <property type="entry name" value="THDP-binding"/>
</dbReference>
<dbReference type="InterPro" id="IPR009014">
    <property type="entry name" value="Transketo_C/PFOR_II"/>
</dbReference>
<dbReference type="InterPro" id="IPR005475">
    <property type="entry name" value="Transketolase-like_Pyr-bd"/>
</dbReference>
<dbReference type="InterPro" id="IPR020826">
    <property type="entry name" value="Transketolase_BS"/>
</dbReference>
<dbReference type="InterPro" id="IPR033248">
    <property type="entry name" value="Transketolase_C"/>
</dbReference>
<dbReference type="InterPro" id="IPR049557">
    <property type="entry name" value="Transketolase_CS"/>
</dbReference>
<dbReference type="NCBIfam" id="TIGR00204">
    <property type="entry name" value="dxs"/>
    <property type="match status" value="1"/>
</dbReference>
<dbReference type="NCBIfam" id="NF003933">
    <property type="entry name" value="PRK05444.2-2"/>
    <property type="match status" value="1"/>
</dbReference>
<dbReference type="PANTHER" id="PTHR43322">
    <property type="entry name" value="1-D-DEOXYXYLULOSE 5-PHOSPHATE SYNTHASE-RELATED"/>
    <property type="match status" value="1"/>
</dbReference>
<dbReference type="PANTHER" id="PTHR43322:SF5">
    <property type="entry name" value="1-DEOXY-D-XYLULOSE-5-PHOSPHATE SYNTHASE, CHLOROPLASTIC"/>
    <property type="match status" value="1"/>
</dbReference>
<dbReference type="Pfam" id="PF13292">
    <property type="entry name" value="DXP_synthase_N"/>
    <property type="match status" value="1"/>
</dbReference>
<dbReference type="Pfam" id="PF02779">
    <property type="entry name" value="Transket_pyr"/>
    <property type="match status" value="1"/>
</dbReference>
<dbReference type="Pfam" id="PF02780">
    <property type="entry name" value="Transketolase_C"/>
    <property type="match status" value="1"/>
</dbReference>
<dbReference type="SMART" id="SM00861">
    <property type="entry name" value="Transket_pyr"/>
    <property type="match status" value="1"/>
</dbReference>
<dbReference type="SUPFAM" id="SSF52518">
    <property type="entry name" value="Thiamin diphosphate-binding fold (THDP-binding)"/>
    <property type="match status" value="2"/>
</dbReference>
<dbReference type="SUPFAM" id="SSF52922">
    <property type="entry name" value="TK C-terminal domain-like"/>
    <property type="match status" value="1"/>
</dbReference>
<dbReference type="PROSITE" id="PS00801">
    <property type="entry name" value="TRANSKETOLASE_1"/>
    <property type="match status" value="1"/>
</dbReference>
<dbReference type="PROSITE" id="PS00802">
    <property type="entry name" value="TRANSKETOLASE_2"/>
    <property type="match status" value="1"/>
</dbReference>
<accession>Q9F1V2</accession>
<proteinExistence type="inferred from homology"/>
<reference key="1">
    <citation type="journal article" date="2002" name="Biosci. Biotechnol. Biochem.">
        <title>Growth-phase dependent expression of the mevalonate pathway in a terpenoid antibiotic-producing Streptomyces strain.</title>
        <authorList>
            <person name="Hamano Y."/>
            <person name="Dairi T."/>
            <person name="Yamamoto M."/>
            <person name="Kuzuyama T."/>
            <person name="Itoh N."/>
            <person name="Seto H."/>
        </authorList>
    </citation>
    <scope>NUCLEOTIDE SEQUENCE [GENOMIC DNA]</scope>
    <source>
        <strain>MF730-N6</strain>
    </source>
</reference>
<name>DXS1_KITGR</name>
<feature type="chain" id="PRO_0000189121" description="1-deoxy-D-xylulose-5-phosphate synthase 1">
    <location>
        <begin position="1"/>
        <end position="649"/>
    </location>
</feature>
<feature type="region of interest" description="Disordered" evidence="2">
    <location>
        <begin position="623"/>
        <end position="649"/>
    </location>
</feature>
<feature type="binding site" evidence="1">
    <location>
        <position position="73"/>
    </location>
    <ligand>
        <name>thiamine diphosphate</name>
        <dbReference type="ChEBI" id="CHEBI:58937"/>
    </ligand>
</feature>
<feature type="binding site" evidence="1">
    <location>
        <begin position="113"/>
        <end position="115"/>
    </location>
    <ligand>
        <name>thiamine diphosphate</name>
        <dbReference type="ChEBI" id="CHEBI:58937"/>
    </ligand>
</feature>
<feature type="binding site" evidence="1">
    <location>
        <position position="144"/>
    </location>
    <ligand>
        <name>Mg(2+)</name>
        <dbReference type="ChEBI" id="CHEBI:18420"/>
    </ligand>
</feature>
<feature type="binding site" evidence="1">
    <location>
        <begin position="145"/>
        <end position="146"/>
    </location>
    <ligand>
        <name>thiamine diphosphate</name>
        <dbReference type="ChEBI" id="CHEBI:58937"/>
    </ligand>
</feature>
<feature type="binding site" evidence="1">
    <location>
        <position position="174"/>
    </location>
    <ligand>
        <name>Mg(2+)</name>
        <dbReference type="ChEBI" id="CHEBI:18420"/>
    </ligand>
</feature>
<feature type="binding site" evidence="1">
    <location>
        <position position="174"/>
    </location>
    <ligand>
        <name>thiamine diphosphate</name>
        <dbReference type="ChEBI" id="CHEBI:58937"/>
    </ligand>
</feature>
<feature type="binding site" evidence="1">
    <location>
        <position position="285"/>
    </location>
    <ligand>
        <name>thiamine diphosphate</name>
        <dbReference type="ChEBI" id="CHEBI:58937"/>
    </ligand>
</feature>
<feature type="binding site" evidence="1">
    <location>
        <position position="367"/>
    </location>
    <ligand>
        <name>thiamine diphosphate</name>
        <dbReference type="ChEBI" id="CHEBI:58937"/>
    </ligand>
</feature>
<sequence>MPLLSRITGPADLRRLHPEQLPPLAAEIRAFLIDNVTRTGGHLGPNLGVVELSIALHRVFDSPHDRILWDTGHQAYVHKLLTGRQDFSRVRAKDGLSGYPSRAESPHDLIENSHASTALGHADGIAKADQLLGVDRCTVAVIGDGALTGGMAWEALNNIAEAEDRPLVIVVNDNERSYAPTIGGLAHHLATLRTTKGYERFLAWGKDALQRTPVVGPPLFDALHGAKKGFKDAFAPQGMFEDLGLKYLGPIDGHDIAGVEQALRRARNFGGPVIVHCLTVKGRGYRPAEQDEADRFHAVNPIDPYTCLPISPSAGASWTSVFGKEMLALGAERPELVAVTAAMLHPVGLGPFAKAYPGRTFDVGIAEQHAVASAAGLATGGLHPVVAVYATFLNRAFDQVLMDVALHRLGVTFVLDRAGVTGNDGASHNGMWDLSVLQVVPGLRIAAPRDAARVREHVRQAVAVEDAPTVVRFPKGELGPEAPAIERIGGVDVLARTGPAPDVLLVAVGPMAAACLDAAALLAADGITATVVDPCWVKPVDPALVELAGAHRMVVTVEDNGRTGGVGAALAQAMRDADVDTPLRDLGIPQEFLAHASRGEILEEIGLTGTGVAAQTAAHARRLLPGTGTRPGAQEYRPRMPLTDWSEPA</sequence>
<evidence type="ECO:0000255" key="1">
    <source>
        <dbReference type="HAMAP-Rule" id="MF_00315"/>
    </source>
</evidence>
<evidence type="ECO:0000256" key="2">
    <source>
        <dbReference type="SAM" id="MobiDB-lite"/>
    </source>
</evidence>